<protein>
    <recommendedName>
        <fullName evidence="1">Peptide methionine sulfoxide reductase MsrB</fullName>
        <ecNumber evidence="1">1.8.4.12</ecNumber>
    </recommendedName>
    <alternativeName>
        <fullName evidence="1">Peptide-methionine (R)-S-oxide reductase</fullName>
    </alternativeName>
</protein>
<gene>
    <name evidence="1" type="primary">msrB</name>
    <name type="ordered locus">SAK_1026</name>
</gene>
<evidence type="ECO:0000255" key="1">
    <source>
        <dbReference type="HAMAP-Rule" id="MF_01400"/>
    </source>
</evidence>
<evidence type="ECO:0000255" key="2">
    <source>
        <dbReference type="PROSITE-ProRule" id="PRU01126"/>
    </source>
</evidence>
<reference key="1">
    <citation type="journal article" date="2005" name="Proc. Natl. Acad. Sci. U.S.A.">
        <title>Genome analysis of multiple pathogenic isolates of Streptococcus agalactiae: implications for the microbial 'pan-genome'.</title>
        <authorList>
            <person name="Tettelin H."/>
            <person name="Masignani V."/>
            <person name="Cieslewicz M.J."/>
            <person name="Donati C."/>
            <person name="Medini D."/>
            <person name="Ward N.L."/>
            <person name="Angiuoli S.V."/>
            <person name="Crabtree J."/>
            <person name="Jones A.L."/>
            <person name="Durkin A.S."/>
            <person name="DeBoy R.T."/>
            <person name="Davidsen T.M."/>
            <person name="Mora M."/>
            <person name="Scarselli M."/>
            <person name="Margarit y Ros I."/>
            <person name="Peterson J.D."/>
            <person name="Hauser C.R."/>
            <person name="Sundaram J.P."/>
            <person name="Nelson W.C."/>
            <person name="Madupu R."/>
            <person name="Brinkac L.M."/>
            <person name="Dodson R.J."/>
            <person name="Rosovitz M.J."/>
            <person name="Sullivan S.A."/>
            <person name="Daugherty S.C."/>
            <person name="Haft D.H."/>
            <person name="Selengut J."/>
            <person name="Gwinn M.L."/>
            <person name="Zhou L."/>
            <person name="Zafar N."/>
            <person name="Khouri H."/>
            <person name="Radune D."/>
            <person name="Dimitrov G."/>
            <person name="Watkins K."/>
            <person name="O'Connor K.J."/>
            <person name="Smith S."/>
            <person name="Utterback T.R."/>
            <person name="White O."/>
            <person name="Rubens C.E."/>
            <person name="Grandi G."/>
            <person name="Madoff L.C."/>
            <person name="Kasper D.L."/>
            <person name="Telford J.L."/>
            <person name="Wessels M.R."/>
            <person name="Rappuoli R."/>
            <person name="Fraser C.M."/>
        </authorList>
    </citation>
    <scope>NUCLEOTIDE SEQUENCE [LARGE SCALE GENOMIC DNA]</scope>
    <source>
        <strain>ATCC 27591 / A909 / CDC SS700</strain>
    </source>
</reference>
<sequence length="144" mass="16353">MKETQEELRQRIGHTAYQVTQNSATEHAFTGKYDDFFEEGIYVDIVSGEVLFSSLDKFQSGCGWPAFSKPIENRMVTNHQDHSHGMHRIEVRSRQADSHLGHVFNDGPVDAGGLRYCINSAALDFIPYDQMAKRGYGDYLSLFD</sequence>
<name>MSRB_STRA1</name>
<dbReference type="EC" id="1.8.4.12" evidence="1"/>
<dbReference type="EMBL" id="CP000114">
    <property type="protein sequence ID" value="ABA45655.1"/>
    <property type="molecule type" value="Genomic_DNA"/>
</dbReference>
<dbReference type="RefSeq" id="WP_000665410.1">
    <property type="nucleotide sequence ID" value="NC_007432.1"/>
</dbReference>
<dbReference type="SMR" id="Q3K1F5"/>
<dbReference type="KEGG" id="sak:SAK_1026"/>
<dbReference type="HOGENOM" id="CLU_031040_8_5_9"/>
<dbReference type="GO" id="GO:0005737">
    <property type="term" value="C:cytoplasm"/>
    <property type="evidence" value="ECO:0007669"/>
    <property type="project" value="TreeGrafter"/>
</dbReference>
<dbReference type="GO" id="GO:0033743">
    <property type="term" value="F:peptide-methionine (R)-S-oxide reductase activity"/>
    <property type="evidence" value="ECO:0007669"/>
    <property type="project" value="UniProtKB-UniRule"/>
</dbReference>
<dbReference type="GO" id="GO:0030091">
    <property type="term" value="P:protein repair"/>
    <property type="evidence" value="ECO:0007669"/>
    <property type="project" value="InterPro"/>
</dbReference>
<dbReference type="GO" id="GO:0006979">
    <property type="term" value="P:response to oxidative stress"/>
    <property type="evidence" value="ECO:0007669"/>
    <property type="project" value="InterPro"/>
</dbReference>
<dbReference type="FunFam" id="2.170.150.20:FF:000003">
    <property type="entry name" value="Peptide methionine sulfoxide reductase MsrB"/>
    <property type="match status" value="1"/>
</dbReference>
<dbReference type="Gene3D" id="2.170.150.20">
    <property type="entry name" value="Peptide methionine sulfoxide reductase"/>
    <property type="match status" value="1"/>
</dbReference>
<dbReference type="HAMAP" id="MF_01400">
    <property type="entry name" value="MsrB"/>
    <property type="match status" value="1"/>
</dbReference>
<dbReference type="InterPro" id="IPR028427">
    <property type="entry name" value="Met_Sox_Rdtase_MsrB"/>
</dbReference>
<dbReference type="InterPro" id="IPR002579">
    <property type="entry name" value="Met_Sox_Rdtase_MsrB_dom"/>
</dbReference>
<dbReference type="InterPro" id="IPR011057">
    <property type="entry name" value="Mss4-like_sf"/>
</dbReference>
<dbReference type="NCBIfam" id="TIGR00357">
    <property type="entry name" value="peptide-methionine (R)-S-oxide reductase MsrB"/>
    <property type="match status" value="1"/>
</dbReference>
<dbReference type="PANTHER" id="PTHR10173">
    <property type="entry name" value="METHIONINE SULFOXIDE REDUCTASE"/>
    <property type="match status" value="1"/>
</dbReference>
<dbReference type="PANTHER" id="PTHR10173:SF59">
    <property type="entry name" value="PEPTIDE METHIONINE SULFOXIDE REDUCTASE MSRA_MSRB"/>
    <property type="match status" value="1"/>
</dbReference>
<dbReference type="Pfam" id="PF01641">
    <property type="entry name" value="SelR"/>
    <property type="match status" value="1"/>
</dbReference>
<dbReference type="SUPFAM" id="SSF51316">
    <property type="entry name" value="Mss4-like"/>
    <property type="match status" value="1"/>
</dbReference>
<dbReference type="PROSITE" id="PS51790">
    <property type="entry name" value="MSRB"/>
    <property type="match status" value="1"/>
</dbReference>
<organism>
    <name type="scientific">Streptococcus agalactiae serotype Ia (strain ATCC 27591 / A909 / CDC SS700)</name>
    <dbReference type="NCBI Taxonomy" id="205921"/>
    <lineage>
        <taxon>Bacteria</taxon>
        <taxon>Bacillati</taxon>
        <taxon>Bacillota</taxon>
        <taxon>Bacilli</taxon>
        <taxon>Lactobacillales</taxon>
        <taxon>Streptococcaceae</taxon>
        <taxon>Streptococcus</taxon>
    </lineage>
</organism>
<accession>Q3K1F5</accession>
<comment type="catalytic activity">
    <reaction evidence="1">
        <text>L-methionyl-[protein] + [thioredoxin]-disulfide + H2O = L-methionyl-(R)-S-oxide-[protein] + [thioredoxin]-dithiol</text>
        <dbReference type="Rhea" id="RHEA:24164"/>
        <dbReference type="Rhea" id="RHEA-COMP:10698"/>
        <dbReference type="Rhea" id="RHEA-COMP:10700"/>
        <dbReference type="Rhea" id="RHEA-COMP:12313"/>
        <dbReference type="Rhea" id="RHEA-COMP:12314"/>
        <dbReference type="ChEBI" id="CHEBI:15377"/>
        <dbReference type="ChEBI" id="CHEBI:16044"/>
        <dbReference type="ChEBI" id="CHEBI:29950"/>
        <dbReference type="ChEBI" id="CHEBI:45764"/>
        <dbReference type="ChEBI" id="CHEBI:50058"/>
        <dbReference type="EC" id="1.8.4.12"/>
    </reaction>
</comment>
<comment type="similarity">
    <text evidence="1">Belongs to the MsrB Met sulfoxide reductase family.</text>
</comment>
<keyword id="KW-0560">Oxidoreductase</keyword>
<feature type="chain" id="PRO_1000068298" description="Peptide methionine sulfoxide reductase MsrB">
    <location>
        <begin position="1"/>
        <end position="144"/>
    </location>
</feature>
<feature type="domain" description="MsrB" evidence="2">
    <location>
        <begin position="5"/>
        <end position="128"/>
    </location>
</feature>
<feature type="active site" description="Nucleophile" evidence="2">
    <location>
        <position position="117"/>
    </location>
</feature>
<proteinExistence type="inferred from homology"/>